<feature type="signal peptide" evidence="3">
    <location>
        <begin position="1"/>
        <end position="24"/>
    </location>
</feature>
<feature type="propeptide" id="PRO_0000400647" evidence="1">
    <location>
        <begin position="25"/>
        <end position="52"/>
    </location>
</feature>
<feature type="peptide" id="PRO_0000400648" description="U3-theraphotoxin-Hhn1i">
    <location>
        <begin position="53"/>
        <end position="87"/>
    </location>
</feature>
<feature type="disulfide bond" evidence="2">
    <location>
        <begin position="54"/>
        <end position="67"/>
    </location>
</feature>
<feature type="disulfide bond" evidence="2">
    <location>
        <begin position="61"/>
        <end position="72"/>
    </location>
</feature>
<feature type="disulfide bond" evidence="2">
    <location>
        <begin position="66"/>
        <end position="79"/>
    </location>
</feature>
<organism>
    <name type="scientific">Cyriopagopus hainanus</name>
    <name type="common">Chinese bird spider</name>
    <name type="synonym">Haplopelma hainanum</name>
    <dbReference type="NCBI Taxonomy" id="209901"/>
    <lineage>
        <taxon>Eukaryota</taxon>
        <taxon>Metazoa</taxon>
        <taxon>Ecdysozoa</taxon>
        <taxon>Arthropoda</taxon>
        <taxon>Chelicerata</taxon>
        <taxon>Arachnida</taxon>
        <taxon>Araneae</taxon>
        <taxon>Mygalomorphae</taxon>
        <taxon>Theraphosidae</taxon>
        <taxon>Haplopelma</taxon>
    </lineage>
</organism>
<sequence length="87" mass="10057">MVNMEASMFLTFAGLVLLFVVCYASESEEKEFPKEMLSSIFAVDNDFKQEERDCAGYMRECKEKLCCSGYVCSSGWKWCVLPAPWRR</sequence>
<keyword id="KW-1015">Disulfide bond</keyword>
<keyword id="KW-0872">Ion channel impairing toxin</keyword>
<keyword id="KW-0960">Knottin</keyword>
<keyword id="KW-0964">Secreted</keyword>
<keyword id="KW-0732">Signal</keyword>
<keyword id="KW-0800">Toxin</keyword>
<accession>D2Y2N7</accession>
<protein>
    <recommendedName>
        <fullName>U3-theraphotoxin-Hhn1i</fullName>
        <shortName>U3-TRTX-Hhn1i</shortName>
    </recommendedName>
    <alternativeName>
        <fullName>Hainantoxin-VIII-17</fullName>
        <shortName>HNTX-VIII-17</shortName>
    </alternativeName>
</protein>
<comment type="function">
    <text evidence="1">Ion channel inhibitor.</text>
</comment>
<comment type="subcellular location">
    <subcellularLocation>
        <location evidence="1">Secreted</location>
    </subcellularLocation>
</comment>
<comment type="tissue specificity">
    <text>Expressed by the venom gland.</text>
</comment>
<comment type="domain">
    <text evidence="1">The presence of a 'disulfide through disulfide knot' structurally defines this protein as a knottin.</text>
</comment>
<comment type="similarity">
    <text evidence="4">Belongs to the neurotoxin 10 (Hwtx-1) family. 51 (Hntx-8) subfamily. Hntx-8 sub-subfamily.</text>
</comment>
<proteinExistence type="inferred from homology"/>
<name>H8Q01_CYRHA</name>
<reference key="1">
    <citation type="journal article" date="2010" name="J. Proteome Res.">
        <title>Molecular diversification of peptide toxins from the tarantula Haplopelma hainanum (Ornithoctonus hainana) venom based on transcriptomic, peptidomic, and genomic analyses.</title>
        <authorList>
            <person name="Tang X."/>
            <person name="Zhang Y."/>
            <person name="Hu W."/>
            <person name="Xu D."/>
            <person name="Tao H."/>
            <person name="Yang X."/>
            <person name="Li Y."/>
            <person name="Jiang L."/>
            <person name="Liang S."/>
        </authorList>
    </citation>
    <scope>NUCLEOTIDE SEQUENCE [LARGE SCALE GENOMIC DNA]</scope>
    <source>
        <tissue>Venom gland</tissue>
    </source>
</reference>
<evidence type="ECO:0000250" key="1"/>
<evidence type="ECO:0000250" key="2">
    <source>
        <dbReference type="UniProtKB" id="B3FIS6"/>
    </source>
</evidence>
<evidence type="ECO:0000255" key="3"/>
<evidence type="ECO:0000305" key="4"/>
<dbReference type="EMBL" id="GU293114">
    <property type="protein sequence ID" value="ADB56930.1"/>
    <property type="molecule type" value="Genomic_DNA"/>
</dbReference>
<dbReference type="ArachnoServer" id="AS001818">
    <property type="toxin name" value="U3-theraphotoxin-Hhn1i"/>
</dbReference>
<dbReference type="GO" id="GO:0005576">
    <property type="term" value="C:extracellular region"/>
    <property type="evidence" value="ECO:0007669"/>
    <property type="project" value="UniProtKB-SubCell"/>
</dbReference>
<dbReference type="GO" id="GO:0008200">
    <property type="term" value="F:ion channel inhibitor activity"/>
    <property type="evidence" value="ECO:0007669"/>
    <property type="project" value="InterPro"/>
</dbReference>
<dbReference type="GO" id="GO:0090729">
    <property type="term" value="F:toxin activity"/>
    <property type="evidence" value="ECO:0007669"/>
    <property type="project" value="UniProtKB-KW"/>
</dbReference>
<dbReference type="InterPro" id="IPR011696">
    <property type="entry name" value="Huwentoxin-1"/>
</dbReference>
<dbReference type="InterPro" id="IPR013140">
    <property type="entry name" value="Huwentoxin_CS1"/>
</dbReference>
<dbReference type="Pfam" id="PF07740">
    <property type="entry name" value="Toxin_12"/>
    <property type="match status" value="1"/>
</dbReference>
<dbReference type="SUPFAM" id="SSF57059">
    <property type="entry name" value="omega toxin-like"/>
    <property type="match status" value="1"/>
</dbReference>
<dbReference type="PROSITE" id="PS60021">
    <property type="entry name" value="HWTX_1"/>
    <property type="match status" value="1"/>
</dbReference>